<keyword id="KW-0963">Cytoplasm</keyword>
<keyword id="KW-0489">Methyltransferase</keyword>
<keyword id="KW-1185">Reference proteome</keyword>
<keyword id="KW-0698">rRNA processing</keyword>
<keyword id="KW-0949">S-adenosyl-L-methionine</keyword>
<keyword id="KW-0808">Transferase</keyword>
<accession>Q6D958</accession>
<evidence type="ECO:0000255" key="1">
    <source>
        <dbReference type="HAMAP-Rule" id="MF_01848"/>
    </source>
</evidence>
<comment type="function">
    <text evidence="1">Specifically methylates the adenine in position 1618 of 23S rRNA.</text>
</comment>
<comment type="catalytic activity">
    <reaction evidence="1">
        <text>adenosine(1618) in 23S rRNA + S-adenosyl-L-methionine = N(6)-methyladenosine(1618) in 23S rRNA + S-adenosyl-L-homocysteine + H(+)</text>
        <dbReference type="Rhea" id="RHEA:16497"/>
        <dbReference type="Rhea" id="RHEA-COMP:10229"/>
        <dbReference type="Rhea" id="RHEA-COMP:10231"/>
        <dbReference type="ChEBI" id="CHEBI:15378"/>
        <dbReference type="ChEBI" id="CHEBI:57856"/>
        <dbReference type="ChEBI" id="CHEBI:59789"/>
        <dbReference type="ChEBI" id="CHEBI:74411"/>
        <dbReference type="ChEBI" id="CHEBI:74449"/>
        <dbReference type="EC" id="2.1.1.181"/>
    </reaction>
</comment>
<comment type="subcellular location">
    <subcellularLocation>
        <location evidence="1">Cytoplasm</location>
    </subcellularLocation>
</comment>
<comment type="similarity">
    <text evidence="1">Belongs to the methyltransferase superfamily. METTL16/RlmF family.</text>
</comment>
<sequence>MTKPAVQKSGLHPRNRHRDRYDFPALKQSYPALIPFVKVNAYGDESVDFANPEAVKTLNQALLQHFYQIEHWTIPDGFLCPPIPGRADYVHHLADLLAEDNRSVVPRDASVLDVGCGANCVYPLIGHREYGWRFTGSEVNPLAMKAANETIEANSGLNRSIRLRRQKNSKAILAGIIHKNDSFDAVMCNPPFHASAEDAREGSQRKLHNLGLDKRSPLNFGGQQDELWCEGGELAFIGQMIKDSVSFGRQCLWFTSLVSRKEHLPEIYRALEAVDAEKVRTIDMAQGQKQSRFVAWSFLDTAARARWLQKR</sequence>
<organism>
    <name type="scientific">Pectobacterium atrosepticum (strain SCRI 1043 / ATCC BAA-672)</name>
    <name type="common">Erwinia carotovora subsp. atroseptica</name>
    <dbReference type="NCBI Taxonomy" id="218491"/>
    <lineage>
        <taxon>Bacteria</taxon>
        <taxon>Pseudomonadati</taxon>
        <taxon>Pseudomonadota</taxon>
        <taxon>Gammaproteobacteria</taxon>
        <taxon>Enterobacterales</taxon>
        <taxon>Pectobacteriaceae</taxon>
        <taxon>Pectobacterium</taxon>
    </lineage>
</organism>
<gene>
    <name evidence="1" type="primary">rlmF</name>
    <name type="ordered locus">ECA0761</name>
</gene>
<proteinExistence type="inferred from homology"/>
<reference key="1">
    <citation type="journal article" date="2004" name="Proc. Natl. Acad. Sci. U.S.A.">
        <title>Genome sequence of the enterobacterial phytopathogen Erwinia carotovora subsp. atroseptica and characterization of virulence factors.</title>
        <authorList>
            <person name="Bell K.S."/>
            <person name="Sebaihia M."/>
            <person name="Pritchard L."/>
            <person name="Holden M.T.G."/>
            <person name="Hyman L.J."/>
            <person name="Holeva M.C."/>
            <person name="Thomson N.R."/>
            <person name="Bentley S.D."/>
            <person name="Churcher L.J.C."/>
            <person name="Mungall K."/>
            <person name="Atkin R."/>
            <person name="Bason N."/>
            <person name="Brooks K."/>
            <person name="Chillingworth T."/>
            <person name="Clark K."/>
            <person name="Doggett J."/>
            <person name="Fraser A."/>
            <person name="Hance Z."/>
            <person name="Hauser H."/>
            <person name="Jagels K."/>
            <person name="Moule S."/>
            <person name="Norbertczak H."/>
            <person name="Ormond D."/>
            <person name="Price C."/>
            <person name="Quail M.A."/>
            <person name="Sanders M."/>
            <person name="Walker D."/>
            <person name="Whitehead S."/>
            <person name="Salmond G.P.C."/>
            <person name="Birch P.R.J."/>
            <person name="Parkhill J."/>
            <person name="Toth I.K."/>
        </authorList>
    </citation>
    <scope>NUCLEOTIDE SEQUENCE [LARGE SCALE GENOMIC DNA]</scope>
    <source>
        <strain>SCRI 1043 / ATCC BAA-672</strain>
    </source>
</reference>
<feature type="chain" id="PRO_0000349905" description="Ribosomal RNA large subunit methyltransferase F">
    <location>
        <begin position="1"/>
        <end position="311"/>
    </location>
</feature>
<dbReference type="EC" id="2.1.1.181" evidence="1"/>
<dbReference type="EMBL" id="BX950851">
    <property type="protein sequence ID" value="CAG73675.1"/>
    <property type="molecule type" value="Genomic_DNA"/>
</dbReference>
<dbReference type="RefSeq" id="WP_011092368.1">
    <property type="nucleotide sequence ID" value="NC_004547.2"/>
</dbReference>
<dbReference type="SMR" id="Q6D958"/>
<dbReference type="STRING" id="218491.ECA0761"/>
<dbReference type="GeneID" id="57207491"/>
<dbReference type="KEGG" id="eca:ECA0761"/>
<dbReference type="PATRIC" id="fig|218491.5.peg.759"/>
<dbReference type="eggNOG" id="COG3129">
    <property type="taxonomic scope" value="Bacteria"/>
</dbReference>
<dbReference type="HOGENOM" id="CLU_027534_3_0_6"/>
<dbReference type="OrthoDB" id="1115728at2"/>
<dbReference type="Proteomes" id="UP000007966">
    <property type="component" value="Chromosome"/>
</dbReference>
<dbReference type="GO" id="GO:0005737">
    <property type="term" value="C:cytoplasm"/>
    <property type="evidence" value="ECO:0007669"/>
    <property type="project" value="UniProtKB-SubCell"/>
</dbReference>
<dbReference type="GO" id="GO:0052907">
    <property type="term" value="F:23S rRNA (adenine(1618)-N(6))-methyltransferase activity"/>
    <property type="evidence" value="ECO:0007669"/>
    <property type="project" value="UniProtKB-EC"/>
</dbReference>
<dbReference type="GO" id="GO:0070475">
    <property type="term" value="P:rRNA base methylation"/>
    <property type="evidence" value="ECO:0007669"/>
    <property type="project" value="TreeGrafter"/>
</dbReference>
<dbReference type="CDD" id="cd02440">
    <property type="entry name" value="AdoMet_MTases"/>
    <property type="match status" value="1"/>
</dbReference>
<dbReference type="FunFam" id="3.40.50.150:FF:000045">
    <property type="entry name" value="Ribosomal RNA large subunit methyltransferase F"/>
    <property type="match status" value="1"/>
</dbReference>
<dbReference type="Gene3D" id="3.40.50.150">
    <property type="entry name" value="Vaccinia Virus protein VP39"/>
    <property type="match status" value="1"/>
</dbReference>
<dbReference type="HAMAP" id="MF_01848">
    <property type="entry name" value="23SrRNA_methyltr_F"/>
    <property type="match status" value="1"/>
</dbReference>
<dbReference type="InterPro" id="IPR010286">
    <property type="entry name" value="METTL16/RlmF"/>
</dbReference>
<dbReference type="InterPro" id="IPR016909">
    <property type="entry name" value="rRNA_lsu_MeTfrase_F"/>
</dbReference>
<dbReference type="InterPro" id="IPR029063">
    <property type="entry name" value="SAM-dependent_MTases_sf"/>
</dbReference>
<dbReference type="NCBIfam" id="NF008725">
    <property type="entry name" value="PRK11727.1"/>
    <property type="match status" value="1"/>
</dbReference>
<dbReference type="PANTHER" id="PTHR13393:SF0">
    <property type="entry name" value="RNA N6-ADENOSINE-METHYLTRANSFERASE METTL16"/>
    <property type="match status" value="1"/>
</dbReference>
<dbReference type="PANTHER" id="PTHR13393">
    <property type="entry name" value="SAM-DEPENDENT METHYLTRANSFERASE"/>
    <property type="match status" value="1"/>
</dbReference>
<dbReference type="Pfam" id="PF05971">
    <property type="entry name" value="Methyltransf_10"/>
    <property type="match status" value="1"/>
</dbReference>
<dbReference type="PIRSF" id="PIRSF029038">
    <property type="entry name" value="Mtase_YbiN_prd"/>
    <property type="match status" value="1"/>
</dbReference>
<dbReference type="SUPFAM" id="SSF53335">
    <property type="entry name" value="S-adenosyl-L-methionine-dependent methyltransferases"/>
    <property type="match status" value="1"/>
</dbReference>
<name>RLMF_PECAS</name>
<protein>
    <recommendedName>
        <fullName evidence="1">Ribosomal RNA large subunit methyltransferase F</fullName>
        <ecNumber evidence="1">2.1.1.181</ecNumber>
    </recommendedName>
    <alternativeName>
        <fullName evidence="1">23S rRNA mA1618 methyltransferase</fullName>
    </alternativeName>
    <alternativeName>
        <fullName evidence="1">rRNA adenine N-6-methyltransferase</fullName>
    </alternativeName>
</protein>